<comment type="function">
    <text evidence="1">Is able to transfer iron-sulfur clusters to apo-ferredoxin. Multiple cycles of [2Fe2S] cluster formation and transfer are observed, suggesting that IscA acts catalytically. Recruits intracellular free iron so as to provide iron for the assembly of transient iron-sulfur cluster in IscU in the presence of IscS, L-cysteine and the thioredoxin reductase system TrxA/TrxB.</text>
</comment>
<comment type="cofactor">
    <cofactor evidence="1">
        <name>Fe cation</name>
        <dbReference type="ChEBI" id="CHEBI:24875"/>
    </cofactor>
    <text evidence="1">Binds 2 iron ions per dimer. The dimer may bind additional iron ions.</text>
</comment>
<comment type="subunit">
    <text evidence="1">Homodimer; may form tetramers and higher multimers.</text>
</comment>
<comment type="similarity">
    <text evidence="1">Belongs to the HesB/IscA family.</text>
</comment>
<sequence>MSITLSDSAAARVNTFLANRGKGFGLRLGVRTSGCSGMAYVLEFVDEPTPEDIVFEDKGVKVVVDGKSLQFLDGTQLDFVKEGLNEGFKFTNPNVKDECGCGESFHV</sequence>
<protein>
    <recommendedName>
        <fullName evidence="1">Iron-binding protein IscA</fullName>
    </recommendedName>
    <alternativeName>
        <fullName evidence="1">Iron-sulfur cluster assembly protein</fullName>
    </alternativeName>
</protein>
<accession>B1LNI4</accession>
<keyword id="KW-0408">Iron</keyword>
<keyword id="KW-0479">Metal-binding</keyword>
<name>ISCA_ECOSM</name>
<feature type="chain" id="PRO_1000145755" description="Iron-binding protein IscA">
    <location>
        <begin position="1"/>
        <end position="107"/>
    </location>
</feature>
<feature type="binding site" evidence="1">
    <location>
        <position position="35"/>
    </location>
    <ligand>
        <name>Fe cation</name>
        <dbReference type="ChEBI" id="CHEBI:24875"/>
    </ligand>
</feature>
<feature type="binding site" evidence="1">
    <location>
        <position position="99"/>
    </location>
    <ligand>
        <name>Fe cation</name>
        <dbReference type="ChEBI" id="CHEBI:24875"/>
    </ligand>
</feature>
<feature type="binding site" evidence="1">
    <location>
        <position position="101"/>
    </location>
    <ligand>
        <name>Fe cation</name>
        <dbReference type="ChEBI" id="CHEBI:24875"/>
    </ligand>
</feature>
<proteinExistence type="inferred from homology"/>
<reference key="1">
    <citation type="journal article" date="2008" name="J. Bacteriol.">
        <title>Insights into the environmental resistance gene pool from the genome sequence of the multidrug-resistant environmental isolate Escherichia coli SMS-3-5.</title>
        <authorList>
            <person name="Fricke W.F."/>
            <person name="Wright M.S."/>
            <person name="Lindell A.H."/>
            <person name="Harkins D.M."/>
            <person name="Baker-Austin C."/>
            <person name="Ravel J."/>
            <person name="Stepanauskas R."/>
        </authorList>
    </citation>
    <scope>NUCLEOTIDE SEQUENCE [LARGE SCALE GENOMIC DNA]</scope>
    <source>
        <strain>SMS-3-5 / SECEC</strain>
    </source>
</reference>
<organism>
    <name type="scientific">Escherichia coli (strain SMS-3-5 / SECEC)</name>
    <dbReference type="NCBI Taxonomy" id="439855"/>
    <lineage>
        <taxon>Bacteria</taxon>
        <taxon>Pseudomonadati</taxon>
        <taxon>Pseudomonadota</taxon>
        <taxon>Gammaproteobacteria</taxon>
        <taxon>Enterobacterales</taxon>
        <taxon>Enterobacteriaceae</taxon>
        <taxon>Escherichia</taxon>
    </lineage>
</organism>
<evidence type="ECO:0000255" key="1">
    <source>
        <dbReference type="HAMAP-Rule" id="MF_01429"/>
    </source>
</evidence>
<gene>
    <name evidence="1" type="primary">iscA</name>
    <name type="ordered locus">EcSMS35_2681</name>
</gene>
<dbReference type="EMBL" id="CP000970">
    <property type="protein sequence ID" value="ACB17385.1"/>
    <property type="molecule type" value="Genomic_DNA"/>
</dbReference>
<dbReference type="RefSeq" id="WP_000028953.1">
    <property type="nucleotide sequence ID" value="NC_010498.1"/>
</dbReference>
<dbReference type="SMR" id="B1LNI4"/>
<dbReference type="GeneID" id="93774608"/>
<dbReference type="KEGG" id="ecm:EcSMS35_2681"/>
<dbReference type="HOGENOM" id="CLU_069054_5_1_6"/>
<dbReference type="Proteomes" id="UP000007011">
    <property type="component" value="Chromosome"/>
</dbReference>
<dbReference type="GO" id="GO:0005829">
    <property type="term" value="C:cytosol"/>
    <property type="evidence" value="ECO:0007669"/>
    <property type="project" value="TreeGrafter"/>
</dbReference>
<dbReference type="GO" id="GO:0051537">
    <property type="term" value="F:2 iron, 2 sulfur cluster binding"/>
    <property type="evidence" value="ECO:0007669"/>
    <property type="project" value="TreeGrafter"/>
</dbReference>
<dbReference type="GO" id="GO:0005506">
    <property type="term" value="F:iron ion binding"/>
    <property type="evidence" value="ECO:0007669"/>
    <property type="project" value="UniProtKB-UniRule"/>
</dbReference>
<dbReference type="GO" id="GO:0016226">
    <property type="term" value="P:iron-sulfur cluster assembly"/>
    <property type="evidence" value="ECO:0007669"/>
    <property type="project" value="UniProtKB-UniRule"/>
</dbReference>
<dbReference type="FunFam" id="2.60.300.12:FF:000001">
    <property type="entry name" value="Iron-binding protein IscA"/>
    <property type="match status" value="1"/>
</dbReference>
<dbReference type="Gene3D" id="2.60.300.12">
    <property type="entry name" value="HesB-like domain"/>
    <property type="match status" value="1"/>
</dbReference>
<dbReference type="HAMAP" id="MF_01429">
    <property type="entry name" value="Fe_S_insert_IscA"/>
    <property type="match status" value="1"/>
</dbReference>
<dbReference type="InterPro" id="IPR050322">
    <property type="entry name" value="Fe-S_cluster_asmbl/transfer"/>
</dbReference>
<dbReference type="InterPro" id="IPR000361">
    <property type="entry name" value="FeS_biogenesis"/>
</dbReference>
<dbReference type="InterPro" id="IPR016092">
    <property type="entry name" value="FeS_cluster_insertion"/>
</dbReference>
<dbReference type="InterPro" id="IPR017870">
    <property type="entry name" value="FeS_cluster_insertion_CS"/>
</dbReference>
<dbReference type="InterPro" id="IPR035903">
    <property type="entry name" value="HesB-like_dom_sf"/>
</dbReference>
<dbReference type="InterPro" id="IPR011302">
    <property type="entry name" value="IscA_proteobacteria"/>
</dbReference>
<dbReference type="NCBIfam" id="TIGR00049">
    <property type="entry name" value="iron-sulfur cluster assembly accessory protein"/>
    <property type="match status" value="1"/>
</dbReference>
<dbReference type="NCBIfam" id="TIGR02011">
    <property type="entry name" value="IscA"/>
    <property type="match status" value="1"/>
</dbReference>
<dbReference type="NCBIfam" id="NF007049">
    <property type="entry name" value="PRK09502.1"/>
    <property type="match status" value="1"/>
</dbReference>
<dbReference type="PANTHER" id="PTHR10072:SF41">
    <property type="entry name" value="IRON-SULFUR CLUSTER ASSEMBLY 1 HOMOLOG, MITOCHONDRIAL"/>
    <property type="match status" value="1"/>
</dbReference>
<dbReference type="PANTHER" id="PTHR10072">
    <property type="entry name" value="IRON-SULFUR CLUSTER ASSEMBLY PROTEIN"/>
    <property type="match status" value="1"/>
</dbReference>
<dbReference type="Pfam" id="PF01521">
    <property type="entry name" value="Fe-S_biosyn"/>
    <property type="match status" value="1"/>
</dbReference>
<dbReference type="SUPFAM" id="SSF89360">
    <property type="entry name" value="HesB-like domain"/>
    <property type="match status" value="1"/>
</dbReference>
<dbReference type="PROSITE" id="PS01152">
    <property type="entry name" value="HESB"/>
    <property type="match status" value="1"/>
</dbReference>